<dbReference type="EMBL" id="AL123456">
    <property type="protein sequence ID" value="CCP46609.1"/>
    <property type="status" value="ALT_INIT"/>
    <property type="molecule type" value="Genomic_DNA"/>
</dbReference>
<dbReference type="PIR" id="H70695">
    <property type="entry name" value="H70695"/>
</dbReference>
<dbReference type="RefSeq" id="NP_218297.1">
    <property type="nucleotide sequence ID" value="NC_000962.3"/>
</dbReference>
<dbReference type="PDB" id="5IET">
    <property type="method" value="X-ray"/>
    <property type="resolution" value="2.88 A"/>
    <property type="chains" value="A/B=15-153"/>
</dbReference>
<dbReference type="PDB" id="5IEU">
    <property type="method" value="X-ray"/>
    <property type="resolution" value="2.80 A"/>
    <property type="chains" value="A/B=44-153"/>
</dbReference>
<dbReference type="PDB" id="5LFJ">
    <property type="method" value="X-ray"/>
    <property type="resolution" value="2.60 A"/>
    <property type="chains" value="A/B/C/D=36-159"/>
</dbReference>
<dbReference type="PDB" id="5LFP">
    <property type="method" value="X-ray"/>
    <property type="resolution" value="3.30 A"/>
    <property type="chains" value="A/B/C/D=36-159"/>
</dbReference>
<dbReference type="PDB" id="5LFQ">
    <property type="method" value="X-ray"/>
    <property type="resolution" value="3.50 A"/>
    <property type="chains" value="A/B/C/D/E/F/G/H/I/J/K/L/M/N/O/P=36-159"/>
</dbReference>
<dbReference type="PDB" id="5LZP">
    <property type="method" value="EM"/>
    <property type="resolution" value="3.45 A"/>
    <property type="chains" value="1/3/5/7/V/X/Z=2-174"/>
</dbReference>
<dbReference type="PDB" id="6BGL">
    <property type="method" value="EM"/>
    <property type="resolution" value="3.40 A"/>
    <property type="chains" value="B/d/e/f/g/h/i/j/k/l/m/n/o/p=1-174"/>
</dbReference>
<dbReference type="PDB" id="6BGO">
    <property type="method" value="EM"/>
    <property type="resolution" value="4.20 A"/>
    <property type="chains" value="d/e/f/g/h/i/j=1-174"/>
</dbReference>
<dbReference type="PDBsum" id="5IET"/>
<dbReference type="PDBsum" id="5IEU"/>
<dbReference type="PDBsum" id="5LFJ"/>
<dbReference type="PDBsum" id="5LFP"/>
<dbReference type="PDBsum" id="5LFQ"/>
<dbReference type="PDBsum" id="5LZP"/>
<dbReference type="PDBsum" id="6BGL"/>
<dbReference type="PDBsum" id="6BGO"/>
<dbReference type="EMDB" id="EMD-4128"/>
<dbReference type="SMR" id="P9WKX3"/>
<dbReference type="STRING" id="83332.Rv3780"/>
<dbReference type="PaxDb" id="83332-Rv3780"/>
<dbReference type="DNASU" id="886115"/>
<dbReference type="GeneID" id="886115"/>
<dbReference type="KEGG" id="mtu:Rv3780"/>
<dbReference type="PATRIC" id="fig|83332.12.peg.4211"/>
<dbReference type="TubercuList" id="Rv3780"/>
<dbReference type="eggNOG" id="ENOG502ZPJ4">
    <property type="taxonomic scope" value="Bacteria"/>
</dbReference>
<dbReference type="InParanoid" id="P9WKX3"/>
<dbReference type="OrthoDB" id="5189298at2"/>
<dbReference type="EvolutionaryTrace" id="P9WKX3"/>
<dbReference type="PHI-base" id="PHI:4674"/>
<dbReference type="Proteomes" id="UP000001584">
    <property type="component" value="Chromosome"/>
</dbReference>
<dbReference type="GO" id="GO:0009274">
    <property type="term" value="C:peptidoglycan-based cell wall"/>
    <property type="evidence" value="ECO:0007005"/>
    <property type="project" value="MTBBASE"/>
</dbReference>
<dbReference type="GO" id="GO:0005886">
    <property type="term" value="C:plasma membrane"/>
    <property type="evidence" value="ECO:0007005"/>
    <property type="project" value="MTBBASE"/>
</dbReference>
<dbReference type="GO" id="GO:0022624">
    <property type="term" value="C:proteasome accessory complex"/>
    <property type="evidence" value="ECO:0000314"/>
    <property type="project" value="UniProtKB"/>
</dbReference>
<dbReference type="GO" id="GO:0070628">
    <property type="term" value="F:proteasome binding"/>
    <property type="evidence" value="ECO:0000314"/>
    <property type="project" value="UniProtKB"/>
</dbReference>
<dbReference type="GO" id="GO:1901800">
    <property type="term" value="P:positive regulation of proteasomal protein catabolic process"/>
    <property type="evidence" value="ECO:0000314"/>
    <property type="project" value="UniProtKB"/>
</dbReference>
<dbReference type="GO" id="GO:0051260">
    <property type="term" value="P:protein homooligomerization"/>
    <property type="evidence" value="ECO:0000314"/>
    <property type="project" value="UniProtKB"/>
</dbReference>
<dbReference type="DisProt" id="DP01737"/>
<dbReference type="InterPro" id="IPR019695">
    <property type="entry name" value="Proteasome_act"/>
</dbReference>
<dbReference type="Pfam" id="PF10759">
    <property type="entry name" value="BPA"/>
    <property type="match status" value="1"/>
</dbReference>
<comment type="function">
    <text evidence="2">Interacts with the core proteasome alpha-subunit (PrcA) through its C-terminal hydrophobic-tyrosine-X motif (HbYX motif). Interaction of Bpa with the proteasome stimulates proteasomal peptidase and casein degradation activity, which suggests Bpa could play a role in the removal of non-native or damaged proteins by influencing the conformation of the proteasome complex upon interaction. Can inhibit degradation of Pup-tagged substrates in vitro by competing with Mpa for association with the proteasome.</text>
</comment>
<comment type="subunit">
    <text evidence="2">Forms a homooligomeric, either hexameric or heptameric, ring-like structure which stacks co-axially with the proteasomal alpha-rings.</text>
</comment>
<comment type="similarity">
    <text evidence="4">Belongs to the Bpa family.</text>
</comment>
<comment type="sequence caution" evidence="4">
    <conflict type="erroneous initiation">
        <sequence resource="EMBL-CDS" id="CCP46609"/>
    </conflict>
    <text>Extended N-terminus.</text>
</comment>
<feature type="chain" id="PRO_0000104145" description="Bacterial proteasome activator">
    <location>
        <begin position="1"/>
        <end position="174"/>
    </location>
</feature>
<feature type="region of interest" description="Disordered" evidence="1">
    <location>
        <begin position="153"/>
        <end position="174"/>
    </location>
</feature>
<feature type="short sequence motif" description="HbYX motif" evidence="5">
    <location>
        <begin position="172"/>
        <end position="174"/>
    </location>
</feature>
<feature type="compositionally biased region" description="Gly residues" evidence="1">
    <location>
        <begin position="161"/>
        <end position="174"/>
    </location>
</feature>
<feature type="mutagenesis site" description="Loss of interaction with the proteasome subunit PrcA." evidence="2">
    <location>
        <begin position="171"/>
        <end position="174"/>
    </location>
</feature>
<feature type="helix" evidence="6">
    <location>
        <begin position="38"/>
        <end position="40"/>
    </location>
</feature>
<feature type="helix" evidence="6">
    <location>
        <begin position="44"/>
        <end position="63"/>
    </location>
</feature>
<feature type="helix" evidence="6">
    <location>
        <begin position="68"/>
        <end position="87"/>
    </location>
</feature>
<feature type="helix" evidence="6">
    <location>
        <begin position="91"/>
        <end position="100"/>
    </location>
</feature>
<feature type="strand" evidence="7">
    <location>
        <begin position="106"/>
        <end position="108"/>
    </location>
</feature>
<feature type="helix" evidence="6">
    <location>
        <begin position="112"/>
        <end position="144"/>
    </location>
</feature>
<organism>
    <name type="scientific">Mycobacterium tuberculosis (strain ATCC 25618 / H37Rv)</name>
    <dbReference type="NCBI Taxonomy" id="83332"/>
    <lineage>
        <taxon>Bacteria</taxon>
        <taxon>Bacillati</taxon>
        <taxon>Actinomycetota</taxon>
        <taxon>Actinomycetes</taxon>
        <taxon>Mycobacteriales</taxon>
        <taxon>Mycobacteriaceae</taxon>
        <taxon>Mycobacterium</taxon>
        <taxon>Mycobacterium tuberculosis complex</taxon>
    </lineage>
</organism>
<reference key="1">
    <citation type="journal article" date="1998" name="Nature">
        <title>Deciphering the biology of Mycobacterium tuberculosis from the complete genome sequence.</title>
        <authorList>
            <person name="Cole S.T."/>
            <person name="Brosch R."/>
            <person name="Parkhill J."/>
            <person name="Garnier T."/>
            <person name="Churcher C.M."/>
            <person name="Harris D.E."/>
            <person name="Gordon S.V."/>
            <person name="Eiglmeier K."/>
            <person name="Gas S."/>
            <person name="Barry C.E. III"/>
            <person name="Tekaia F."/>
            <person name="Badcock K."/>
            <person name="Basham D."/>
            <person name="Brown D."/>
            <person name="Chillingworth T."/>
            <person name="Connor R."/>
            <person name="Davies R.M."/>
            <person name="Devlin K."/>
            <person name="Feltwell T."/>
            <person name="Gentles S."/>
            <person name="Hamlin N."/>
            <person name="Holroyd S."/>
            <person name="Hornsby T."/>
            <person name="Jagels K."/>
            <person name="Krogh A."/>
            <person name="McLean J."/>
            <person name="Moule S."/>
            <person name="Murphy L.D."/>
            <person name="Oliver S."/>
            <person name="Osborne J."/>
            <person name="Quail M.A."/>
            <person name="Rajandream M.A."/>
            <person name="Rogers J."/>
            <person name="Rutter S."/>
            <person name="Seeger K."/>
            <person name="Skelton S."/>
            <person name="Squares S."/>
            <person name="Squares R."/>
            <person name="Sulston J.E."/>
            <person name="Taylor K."/>
            <person name="Whitehead S."/>
            <person name="Barrell B.G."/>
        </authorList>
    </citation>
    <scope>NUCLEOTIDE SEQUENCE [LARGE SCALE GENOMIC DNA]</scope>
    <source>
        <strain>ATCC 25618 / H37Rv</strain>
    </source>
</reference>
<reference key="2">
    <citation type="journal article" date="2011" name="Mol. Cell. Proteomics">
        <title>Proteogenomic analysis of Mycobacterium tuberculosis by high resolution mass spectrometry.</title>
        <authorList>
            <person name="Kelkar D.S."/>
            <person name="Kumar D."/>
            <person name="Kumar P."/>
            <person name="Balakrishnan L."/>
            <person name="Muthusamy B."/>
            <person name="Yadav A.K."/>
            <person name="Shrivastava P."/>
            <person name="Marimuthu A."/>
            <person name="Anand S."/>
            <person name="Sundaram H."/>
            <person name="Kingsbury R."/>
            <person name="Harsha H.C."/>
            <person name="Nair B."/>
            <person name="Prasad T.S."/>
            <person name="Chauhan D.S."/>
            <person name="Katoch K."/>
            <person name="Katoch V.M."/>
            <person name="Kumar P."/>
            <person name="Chaerkady R."/>
            <person name="Ramachandran S."/>
            <person name="Dash D."/>
            <person name="Pandey A."/>
        </authorList>
    </citation>
    <scope>IDENTIFICATION BY MASS SPECTROMETRY [LARGE SCALE ANALYSIS]</scope>
    <source>
        <strain>ATCC 25618 / H37Rv</strain>
    </source>
</reference>
<reference key="3">
    <citation type="journal article" date="2014" name="PLoS ONE">
        <title>Bacterial proteasome activator Bpa (Rv3780) is a novel ring-shaped interactor of the mycobacterial proteasome.</title>
        <authorList>
            <person name="Delley C.L."/>
            <person name="Laederach J."/>
            <person name="Ziemski M."/>
            <person name="Bolten M."/>
            <person name="Boehringer D."/>
            <person name="Weber-Ban E."/>
        </authorList>
    </citation>
    <scope>FUNCTION</scope>
    <scope>SUBUNIT</scope>
    <scope>INTERACTION WITH PRCA</scope>
    <scope>MUTAGENESIS OF 171-GLY--LEU-174</scope>
    <source>
        <strain>ATCC 25618 / H37Rv</strain>
    </source>
</reference>
<evidence type="ECO:0000256" key="1">
    <source>
        <dbReference type="SAM" id="MobiDB-lite"/>
    </source>
</evidence>
<evidence type="ECO:0000269" key="2">
    <source>
    </source>
</evidence>
<evidence type="ECO:0000303" key="3">
    <source>
    </source>
</evidence>
<evidence type="ECO:0000305" key="4"/>
<evidence type="ECO:0000305" key="5">
    <source>
    </source>
</evidence>
<evidence type="ECO:0007829" key="6">
    <source>
        <dbReference type="PDB" id="5LFJ"/>
    </source>
</evidence>
<evidence type="ECO:0007829" key="7">
    <source>
        <dbReference type="PDB" id="5LFP"/>
    </source>
</evidence>
<keyword id="KW-0002">3D-structure</keyword>
<keyword id="KW-0647">Proteasome</keyword>
<keyword id="KW-1185">Reference proteome</keyword>
<name>BPA_MYCTU</name>
<proteinExistence type="evidence at protein level"/>
<accession>P9WKX3</accession>
<accession>L0TDS4</accession>
<accession>P65091</accession>
<accession>P72046</accession>
<sequence length="174" mass="18944">MVIGLSTGSDDDDVEVIGGVDPRLIAVQENDSDESSLTDLVEQPAKVMRIGTMIKQLLEEVRAAPLDEASRNRLRDIHATSIRELEDGLAPELREELDRLTLPFNEDAVPSDAELRIAQAQLVGWLEGLFHGIQTALFAQQMAARAQLQQMRQGALPPGVGKSGQHGHGTGQYL</sequence>
<gene>
    <name evidence="3" type="primary">bpa</name>
    <name type="ordered locus">Rv3780</name>
    <name type="ORF">MTCY13D12.14</name>
</gene>
<protein>
    <recommendedName>
        <fullName evidence="3">Bacterial proteasome activator</fullName>
    </recommendedName>
</protein>